<name>PANB_SALTI</name>
<comment type="function">
    <text evidence="1">Catalyzes the reversible reaction in which hydroxymethyl group from 5,10-methylenetetrahydrofolate is transferred onto alpha-ketoisovalerate to form ketopantoate.</text>
</comment>
<comment type="catalytic activity">
    <reaction evidence="1">
        <text>3-methyl-2-oxobutanoate + (6R)-5,10-methylene-5,6,7,8-tetrahydrofolate + H2O = 2-dehydropantoate + (6S)-5,6,7,8-tetrahydrofolate</text>
        <dbReference type="Rhea" id="RHEA:11824"/>
        <dbReference type="ChEBI" id="CHEBI:11561"/>
        <dbReference type="ChEBI" id="CHEBI:11851"/>
        <dbReference type="ChEBI" id="CHEBI:15377"/>
        <dbReference type="ChEBI" id="CHEBI:15636"/>
        <dbReference type="ChEBI" id="CHEBI:57453"/>
        <dbReference type="EC" id="2.1.2.11"/>
    </reaction>
</comment>
<comment type="cofactor">
    <cofactor evidence="1">
        <name>Mg(2+)</name>
        <dbReference type="ChEBI" id="CHEBI:18420"/>
    </cofactor>
    <text evidence="1">Binds 1 Mg(2+) ion per subunit.</text>
</comment>
<comment type="pathway">
    <text evidence="1">Cofactor biosynthesis; (R)-pantothenate biosynthesis; (R)-pantoate from 3-methyl-2-oxobutanoate: step 1/2.</text>
</comment>
<comment type="subunit">
    <text evidence="1">Homodecamer; pentamer of dimers.</text>
</comment>
<comment type="subcellular location">
    <subcellularLocation>
        <location evidence="1">Cytoplasm</location>
    </subcellularLocation>
</comment>
<comment type="similarity">
    <text evidence="1">Belongs to the PanB family.</text>
</comment>
<accession>Q8Z9D2</accession>
<evidence type="ECO:0000255" key="1">
    <source>
        <dbReference type="HAMAP-Rule" id="MF_00156"/>
    </source>
</evidence>
<protein>
    <recommendedName>
        <fullName evidence="1">3-methyl-2-oxobutanoate hydroxymethyltransferase</fullName>
        <ecNumber evidence="1">2.1.2.11</ecNumber>
    </recommendedName>
    <alternativeName>
        <fullName evidence="1">Ketopantoate hydroxymethyltransferase</fullName>
        <shortName evidence="1">KPHMT</shortName>
    </alternativeName>
</protein>
<proteinExistence type="inferred from homology"/>
<sequence length="264" mass="28249">MSKPTTIAVLQKCKQEKKRFATITAYDYSFAKLFADEGINVMLVGDSLGMTIQGHDSTLPVTVEDIAYHTRAVRRGAPNCLLLSDLPFMAYATPEQAFENAAIVMRAGANMVKIEGGAWLVDTVKMLTERAVPVCGHLGLTPQSVNIFGGYKIQGRGDAGQILLDDALALEAAGAQLLVLECVPVELAKRVTEALSIPVIGIGAGNVTDGQILVMHDAFGITGGHIPKFAKNFLAEAGDMRAAVRQYMAEVESGVYPGEEHSFH</sequence>
<organism>
    <name type="scientific">Salmonella typhi</name>
    <dbReference type="NCBI Taxonomy" id="90370"/>
    <lineage>
        <taxon>Bacteria</taxon>
        <taxon>Pseudomonadati</taxon>
        <taxon>Pseudomonadota</taxon>
        <taxon>Gammaproteobacteria</taxon>
        <taxon>Enterobacterales</taxon>
        <taxon>Enterobacteriaceae</taxon>
        <taxon>Salmonella</taxon>
    </lineage>
</organism>
<keyword id="KW-0963">Cytoplasm</keyword>
<keyword id="KW-0460">Magnesium</keyword>
<keyword id="KW-0479">Metal-binding</keyword>
<keyword id="KW-0566">Pantothenate biosynthesis</keyword>
<keyword id="KW-0808">Transferase</keyword>
<gene>
    <name evidence="1" type="primary">panB</name>
    <name type="ordered locus">STY0200</name>
    <name type="ordered locus">t0183</name>
</gene>
<reference key="1">
    <citation type="journal article" date="2001" name="Nature">
        <title>Complete genome sequence of a multiple drug resistant Salmonella enterica serovar Typhi CT18.</title>
        <authorList>
            <person name="Parkhill J."/>
            <person name="Dougan G."/>
            <person name="James K.D."/>
            <person name="Thomson N.R."/>
            <person name="Pickard D."/>
            <person name="Wain J."/>
            <person name="Churcher C.M."/>
            <person name="Mungall K.L."/>
            <person name="Bentley S.D."/>
            <person name="Holden M.T.G."/>
            <person name="Sebaihia M."/>
            <person name="Baker S."/>
            <person name="Basham D."/>
            <person name="Brooks K."/>
            <person name="Chillingworth T."/>
            <person name="Connerton P."/>
            <person name="Cronin A."/>
            <person name="Davis P."/>
            <person name="Davies R.M."/>
            <person name="Dowd L."/>
            <person name="White N."/>
            <person name="Farrar J."/>
            <person name="Feltwell T."/>
            <person name="Hamlin N."/>
            <person name="Haque A."/>
            <person name="Hien T.T."/>
            <person name="Holroyd S."/>
            <person name="Jagels K."/>
            <person name="Krogh A."/>
            <person name="Larsen T.S."/>
            <person name="Leather S."/>
            <person name="Moule S."/>
            <person name="O'Gaora P."/>
            <person name="Parry C."/>
            <person name="Quail M.A."/>
            <person name="Rutherford K.M."/>
            <person name="Simmonds M."/>
            <person name="Skelton J."/>
            <person name="Stevens K."/>
            <person name="Whitehead S."/>
            <person name="Barrell B.G."/>
        </authorList>
    </citation>
    <scope>NUCLEOTIDE SEQUENCE [LARGE SCALE GENOMIC DNA]</scope>
    <source>
        <strain>CT18</strain>
    </source>
</reference>
<reference key="2">
    <citation type="journal article" date="2003" name="J. Bacteriol.">
        <title>Comparative genomics of Salmonella enterica serovar Typhi strains Ty2 and CT18.</title>
        <authorList>
            <person name="Deng W."/>
            <person name="Liou S.-R."/>
            <person name="Plunkett G. III"/>
            <person name="Mayhew G.F."/>
            <person name="Rose D.J."/>
            <person name="Burland V."/>
            <person name="Kodoyianni V."/>
            <person name="Schwartz D.C."/>
            <person name="Blattner F.R."/>
        </authorList>
    </citation>
    <scope>NUCLEOTIDE SEQUENCE [LARGE SCALE GENOMIC DNA]</scope>
    <source>
        <strain>ATCC 700931 / Ty2</strain>
    </source>
</reference>
<feature type="chain" id="PRO_0000184884" description="3-methyl-2-oxobutanoate hydroxymethyltransferase">
    <location>
        <begin position="1"/>
        <end position="264"/>
    </location>
</feature>
<feature type="active site" description="Proton acceptor" evidence="1">
    <location>
        <position position="181"/>
    </location>
</feature>
<feature type="binding site" evidence="1">
    <location>
        <begin position="46"/>
        <end position="47"/>
    </location>
    <ligand>
        <name>3-methyl-2-oxobutanoate</name>
        <dbReference type="ChEBI" id="CHEBI:11851"/>
    </ligand>
</feature>
<feature type="binding site" evidence="1">
    <location>
        <position position="46"/>
    </location>
    <ligand>
        <name>Mg(2+)</name>
        <dbReference type="ChEBI" id="CHEBI:18420"/>
    </ligand>
</feature>
<feature type="binding site" evidence="1">
    <location>
        <position position="85"/>
    </location>
    <ligand>
        <name>3-methyl-2-oxobutanoate</name>
        <dbReference type="ChEBI" id="CHEBI:11851"/>
    </ligand>
</feature>
<feature type="binding site" evidence="1">
    <location>
        <position position="85"/>
    </location>
    <ligand>
        <name>Mg(2+)</name>
        <dbReference type="ChEBI" id="CHEBI:18420"/>
    </ligand>
</feature>
<feature type="binding site" evidence="1">
    <location>
        <position position="113"/>
    </location>
    <ligand>
        <name>3-methyl-2-oxobutanoate</name>
        <dbReference type="ChEBI" id="CHEBI:11851"/>
    </ligand>
</feature>
<feature type="binding site" evidence="1">
    <location>
        <position position="115"/>
    </location>
    <ligand>
        <name>Mg(2+)</name>
        <dbReference type="ChEBI" id="CHEBI:18420"/>
    </ligand>
</feature>
<dbReference type="EC" id="2.1.2.11" evidence="1"/>
<dbReference type="EMBL" id="AL513382">
    <property type="protein sequence ID" value="CAD01336.1"/>
    <property type="molecule type" value="Genomic_DNA"/>
</dbReference>
<dbReference type="EMBL" id="AE014613">
    <property type="protein sequence ID" value="AAO67915.1"/>
    <property type="molecule type" value="Genomic_DNA"/>
</dbReference>
<dbReference type="RefSeq" id="NP_454791.1">
    <property type="nucleotide sequence ID" value="NC_003198.1"/>
</dbReference>
<dbReference type="RefSeq" id="WP_000043003.1">
    <property type="nucleotide sequence ID" value="NZ_WSUR01000009.1"/>
</dbReference>
<dbReference type="SMR" id="Q8Z9D2"/>
<dbReference type="STRING" id="220341.gene:17584238"/>
<dbReference type="KEGG" id="stt:t0183"/>
<dbReference type="KEGG" id="sty:STY0200"/>
<dbReference type="PATRIC" id="fig|220341.7.peg.203"/>
<dbReference type="eggNOG" id="COG0413">
    <property type="taxonomic scope" value="Bacteria"/>
</dbReference>
<dbReference type="HOGENOM" id="CLU_036645_1_0_6"/>
<dbReference type="OMA" id="VLVWTDM"/>
<dbReference type="OrthoDB" id="9781789at2"/>
<dbReference type="UniPathway" id="UPA00028">
    <property type="reaction ID" value="UER00003"/>
</dbReference>
<dbReference type="Proteomes" id="UP000000541">
    <property type="component" value="Chromosome"/>
</dbReference>
<dbReference type="Proteomes" id="UP000002670">
    <property type="component" value="Chromosome"/>
</dbReference>
<dbReference type="GO" id="GO:0005737">
    <property type="term" value="C:cytoplasm"/>
    <property type="evidence" value="ECO:0007669"/>
    <property type="project" value="UniProtKB-SubCell"/>
</dbReference>
<dbReference type="GO" id="GO:0003864">
    <property type="term" value="F:3-methyl-2-oxobutanoate hydroxymethyltransferase activity"/>
    <property type="evidence" value="ECO:0007669"/>
    <property type="project" value="UniProtKB-UniRule"/>
</dbReference>
<dbReference type="GO" id="GO:0000287">
    <property type="term" value="F:magnesium ion binding"/>
    <property type="evidence" value="ECO:0007669"/>
    <property type="project" value="TreeGrafter"/>
</dbReference>
<dbReference type="GO" id="GO:0015940">
    <property type="term" value="P:pantothenate biosynthetic process"/>
    <property type="evidence" value="ECO:0007669"/>
    <property type="project" value="UniProtKB-UniRule"/>
</dbReference>
<dbReference type="CDD" id="cd06557">
    <property type="entry name" value="KPHMT-like"/>
    <property type="match status" value="1"/>
</dbReference>
<dbReference type="FunFam" id="3.20.20.60:FF:000003">
    <property type="entry name" value="3-methyl-2-oxobutanoate hydroxymethyltransferase"/>
    <property type="match status" value="1"/>
</dbReference>
<dbReference type="Gene3D" id="3.20.20.60">
    <property type="entry name" value="Phosphoenolpyruvate-binding domains"/>
    <property type="match status" value="1"/>
</dbReference>
<dbReference type="HAMAP" id="MF_00156">
    <property type="entry name" value="PanB"/>
    <property type="match status" value="1"/>
</dbReference>
<dbReference type="InterPro" id="IPR003700">
    <property type="entry name" value="Pantoate_hydroxy_MeTrfase"/>
</dbReference>
<dbReference type="InterPro" id="IPR015813">
    <property type="entry name" value="Pyrv/PenolPyrv_kinase-like_dom"/>
</dbReference>
<dbReference type="InterPro" id="IPR040442">
    <property type="entry name" value="Pyrv_kinase-like_dom_sf"/>
</dbReference>
<dbReference type="NCBIfam" id="TIGR00222">
    <property type="entry name" value="panB"/>
    <property type="match status" value="1"/>
</dbReference>
<dbReference type="NCBIfam" id="NF001452">
    <property type="entry name" value="PRK00311.1"/>
    <property type="match status" value="1"/>
</dbReference>
<dbReference type="PANTHER" id="PTHR20881">
    <property type="entry name" value="3-METHYL-2-OXOBUTANOATE HYDROXYMETHYLTRANSFERASE"/>
    <property type="match status" value="1"/>
</dbReference>
<dbReference type="PANTHER" id="PTHR20881:SF0">
    <property type="entry name" value="3-METHYL-2-OXOBUTANOATE HYDROXYMETHYLTRANSFERASE"/>
    <property type="match status" value="1"/>
</dbReference>
<dbReference type="Pfam" id="PF02548">
    <property type="entry name" value="Pantoate_transf"/>
    <property type="match status" value="1"/>
</dbReference>
<dbReference type="PIRSF" id="PIRSF000388">
    <property type="entry name" value="Pantoate_hydroxy_MeTrfase"/>
    <property type="match status" value="1"/>
</dbReference>
<dbReference type="SUPFAM" id="SSF51621">
    <property type="entry name" value="Phosphoenolpyruvate/pyruvate domain"/>
    <property type="match status" value="1"/>
</dbReference>